<reference key="1">
    <citation type="submission" date="2003-10" db="EMBL/GenBank/DDBJ databases">
        <title>The complete genome sequence of the alkaliphilic Bacillus clausii KSM-K16.</title>
        <authorList>
            <person name="Takaki Y."/>
            <person name="Kageyama Y."/>
            <person name="Shimamura S."/>
            <person name="Suzuki H."/>
            <person name="Nishi S."/>
            <person name="Hatada Y."/>
            <person name="Kawai S."/>
            <person name="Ito S."/>
            <person name="Horikoshi K."/>
        </authorList>
    </citation>
    <scope>NUCLEOTIDE SEQUENCE [LARGE SCALE GENOMIC DNA]</scope>
    <source>
        <strain>KSM-K16</strain>
    </source>
</reference>
<feature type="chain" id="PRO_0000178429" description="Large ribosomal subunit protein bL28">
    <location>
        <begin position="1"/>
        <end position="62"/>
    </location>
</feature>
<feature type="region of interest" description="Disordered" evidence="2">
    <location>
        <begin position="1"/>
        <end position="27"/>
    </location>
</feature>
<feature type="compositionally biased region" description="Basic residues" evidence="2">
    <location>
        <begin position="10"/>
        <end position="27"/>
    </location>
</feature>
<organism>
    <name type="scientific">Shouchella clausii (strain KSM-K16)</name>
    <name type="common">Alkalihalobacillus clausii</name>
    <dbReference type="NCBI Taxonomy" id="66692"/>
    <lineage>
        <taxon>Bacteria</taxon>
        <taxon>Bacillati</taxon>
        <taxon>Bacillota</taxon>
        <taxon>Bacilli</taxon>
        <taxon>Bacillales</taxon>
        <taxon>Bacillaceae</taxon>
        <taxon>Shouchella</taxon>
    </lineage>
</organism>
<gene>
    <name evidence="1" type="primary">rpmB</name>
    <name type="ordered locus">ABC2311</name>
</gene>
<evidence type="ECO:0000255" key="1">
    <source>
        <dbReference type="HAMAP-Rule" id="MF_00373"/>
    </source>
</evidence>
<evidence type="ECO:0000256" key="2">
    <source>
        <dbReference type="SAM" id="MobiDB-lite"/>
    </source>
</evidence>
<evidence type="ECO:0000305" key="3"/>
<sequence>MARECYITGRKARSGNKRSHAMNKSKRRFGANVQKVRILVDGKPKRVYVSARALKSGKVERV</sequence>
<proteinExistence type="inferred from homology"/>
<comment type="similarity">
    <text evidence="1">Belongs to the bacterial ribosomal protein bL28 family.</text>
</comment>
<keyword id="KW-1185">Reference proteome</keyword>
<keyword id="KW-0687">Ribonucleoprotein</keyword>
<keyword id="KW-0689">Ribosomal protein</keyword>
<dbReference type="EMBL" id="AP006627">
    <property type="protein sequence ID" value="BAD64846.1"/>
    <property type="molecule type" value="Genomic_DNA"/>
</dbReference>
<dbReference type="RefSeq" id="WP_011247154.1">
    <property type="nucleotide sequence ID" value="NC_006582.1"/>
</dbReference>
<dbReference type="SMR" id="Q5WFL4"/>
<dbReference type="STRING" id="66692.ABC2311"/>
<dbReference type="GeneID" id="86926475"/>
<dbReference type="KEGG" id="bcl:ABC2311"/>
<dbReference type="eggNOG" id="COG0227">
    <property type="taxonomic scope" value="Bacteria"/>
</dbReference>
<dbReference type="HOGENOM" id="CLU_064548_7_1_9"/>
<dbReference type="OrthoDB" id="9805609at2"/>
<dbReference type="Proteomes" id="UP000001168">
    <property type="component" value="Chromosome"/>
</dbReference>
<dbReference type="GO" id="GO:1990904">
    <property type="term" value="C:ribonucleoprotein complex"/>
    <property type="evidence" value="ECO:0007669"/>
    <property type="project" value="UniProtKB-KW"/>
</dbReference>
<dbReference type="GO" id="GO:0005840">
    <property type="term" value="C:ribosome"/>
    <property type="evidence" value="ECO:0007669"/>
    <property type="project" value="UniProtKB-KW"/>
</dbReference>
<dbReference type="GO" id="GO:0003735">
    <property type="term" value="F:structural constituent of ribosome"/>
    <property type="evidence" value="ECO:0007669"/>
    <property type="project" value="InterPro"/>
</dbReference>
<dbReference type="GO" id="GO:0006412">
    <property type="term" value="P:translation"/>
    <property type="evidence" value="ECO:0007669"/>
    <property type="project" value="UniProtKB-UniRule"/>
</dbReference>
<dbReference type="Gene3D" id="2.30.170.40">
    <property type="entry name" value="Ribosomal protein L28/L24"/>
    <property type="match status" value="1"/>
</dbReference>
<dbReference type="HAMAP" id="MF_00373">
    <property type="entry name" value="Ribosomal_bL28"/>
    <property type="match status" value="1"/>
</dbReference>
<dbReference type="InterPro" id="IPR050096">
    <property type="entry name" value="Bacterial_rp_bL28"/>
</dbReference>
<dbReference type="InterPro" id="IPR026569">
    <property type="entry name" value="Ribosomal_bL28"/>
</dbReference>
<dbReference type="InterPro" id="IPR034704">
    <property type="entry name" value="Ribosomal_bL28/bL31-like_sf"/>
</dbReference>
<dbReference type="InterPro" id="IPR001383">
    <property type="entry name" value="Ribosomal_bL28_bact-type"/>
</dbReference>
<dbReference type="InterPro" id="IPR037147">
    <property type="entry name" value="Ribosomal_bL28_sf"/>
</dbReference>
<dbReference type="NCBIfam" id="TIGR00009">
    <property type="entry name" value="L28"/>
    <property type="match status" value="1"/>
</dbReference>
<dbReference type="PANTHER" id="PTHR39080">
    <property type="entry name" value="50S RIBOSOMAL PROTEIN L28"/>
    <property type="match status" value="1"/>
</dbReference>
<dbReference type="PANTHER" id="PTHR39080:SF1">
    <property type="entry name" value="LARGE RIBOSOMAL SUBUNIT PROTEIN BL28A"/>
    <property type="match status" value="1"/>
</dbReference>
<dbReference type="Pfam" id="PF00830">
    <property type="entry name" value="Ribosomal_L28"/>
    <property type="match status" value="1"/>
</dbReference>
<dbReference type="SUPFAM" id="SSF143800">
    <property type="entry name" value="L28p-like"/>
    <property type="match status" value="1"/>
</dbReference>
<protein>
    <recommendedName>
        <fullName evidence="1">Large ribosomal subunit protein bL28</fullName>
    </recommendedName>
    <alternativeName>
        <fullName evidence="3">50S ribosomal protein L28</fullName>
    </alternativeName>
</protein>
<name>RL28_SHOC1</name>
<accession>Q5WFL4</accession>